<protein>
    <recommendedName>
        <fullName evidence="1">tRNA uridine(34) hydroxylase</fullName>
        <ecNumber evidence="1">1.14.-.-</ecNumber>
    </recommendedName>
    <alternativeName>
        <fullName evidence="1">tRNA hydroxylation protein O</fullName>
    </alternativeName>
</protein>
<sequence>MSNTVVCALYRFVSLENYQEIQAPLLKMMQANNIKGTLLLAQEGINGTVAGSREDINTLIAWLKSDPRLNKLTTKESFTEENPFYRTKVKLKKEIVTMGVEGIDPKRTAGSYVKPKDWNALISDPDVLLVDTRNDYEISIGTFKNAVDPKTTNFREFPQYVKDNLDPAVNKKVAMFCTGGIRCEKSTAYLKEQGFDEVYHLEGGVLKYLEEVPQEESMWQGECFVFDNRVSVNHKLEKGQYDQCHGCRLPITEDDKKSDKYQEGVCCHQCHEQLTVEQKQRFAQREKQVGLAKQRGQTHIGNDAVAQLENNRLKKQAVKQAQRVEAKK</sequence>
<keyword id="KW-0560">Oxidoreductase</keyword>
<keyword id="KW-1185">Reference proteome</keyword>
<keyword id="KW-0819">tRNA processing</keyword>
<name>TRHO_PSYIN</name>
<proteinExistence type="inferred from homology"/>
<comment type="function">
    <text evidence="1">Catalyzes oxygen-dependent 5-hydroxyuridine (ho5U) modification at position 34 in tRNAs.</text>
</comment>
<comment type="catalytic activity">
    <reaction evidence="1">
        <text>uridine(34) in tRNA + AH2 + O2 = 5-hydroxyuridine(34) in tRNA + A + H2O</text>
        <dbReference type="Rhea" id="RHEA:64224"/>
        <dbReference type="Rhea" id="RHEA-COMP:11727"/>
        <dbReference type="Rhea" id="RHEA-COMP:13381"/>
        <dbReference type="ChEBI" id="CHEBI:13193"/>
        <dbReference type="ChEBI" id="CHEBI:15377"/>
        <dbReference type="ChEBI" id="CHEBI:15379"/>
        <dbReference type="ChEBI" id="CHEBI:17499"/>
        <dbReference type="ChEBI" id="CHEBI:65315"/>
        <dbReference type="ChEBI" id="CHEBI:136877"/>
    </reaction>
</comment>
<comment type="similarity">
    <text evidence="1">Belongs to the TrhO family.</text>
</comment>
<gene>
    <name evidence="1" type="primary">trhO</name>
    <name type="ordered locus">Ping_3407</name>
</gene>
<evidence type="ECO:0000255" key="1">
    <source>
        <dbReference type="HAMAP-Rule" id="MF_00469"/>
    </source>
</evidence>
<feature type="chain" id="PRO_1000013760" description="tRNA uridine(34) hydroxylase">
    <location>
        <begin position="1"/>
        <end position="328"/>
    </location>
</feature>
<feature type="domain" description="Rhodanese" evidence="1">
    <location>
        <begin position="123"/>
        <end position="217"/>
    </location>
</feature>
<feature type="active site" description="Cysteine persulfide intermediate" evidence="1">
    <location>
        <position position="177"/>
    </location>
</feature>
<organism>
    <name type="scientific">Psychromonas ingrahamii (strain DSM 17664 / CCUG 51855 / 37)</name>
    <dbReference type="NCBI Taxonomy" id="357804"/>
    <lineage>
        <taxon>Bacteria</taxon>
        <taxon>Pseudomonadati</taxon>
        <taxon>Pseudomonadota</taxon>
        <taxon>Gammaproteobacteria</taxon>
        <taxon>Alteromonadales</taxon>
        <taxon>Psychromonadaceae</taxon>
        <taxon>Psychromonas</taxon>
    </lineage>
</organism>
<dbReference type="EC" id="1.14.-.-" evidence="1"/>
<dbReference type="EMBL" id="CP000510">
    <property type="protein sequence ID" value="ABM05091.1"/>
    <property type="molecule type" value="Genomic_DNA"/>
</dbReference>
<dbReference type="RefSeq" id="WP_011771643.1">
    <property type="nucleotide sequence ID" value="NC_008709.1"/>
</dbReference>
<dbReference type="SMR" id="A1T026"/>
<dbReference type="STRING" id="357804.Ping_3407"/>
<dbReference type="KEGG" id="pin:Ping_3407"/>
<dbReference type="eggNOG" id="COG1054">
    <property type="taxonomic scope" value="Bacteria"/>
</dbReference>
<dbReference type="HOGENOM" id="CLU_038878_0_0_6"/>
<dbReference type="OrthoDB" id="9778326at2"/>
<dbReference type="Proteomes" id="UP000000639">
    <property type="component" value="Chromosome"/>
</dbReference>
<dbReference type="GO" id="GO:0016705">
    <property type="term" value="F:oxidoreductase activity, acting on paired donors, with incorporation or reduction of molecular oxygen"/>
    <property type="evidence" value="ECO:0007669"/>
    <property type="project" value="UniProtKB-UniRule"/>
</dbReference>
<dbReference type="GO" id="GO:0006400">
    <property type="term" value="P:tRNA modification"/>
    <property type="evidence" value="ECO:0007669"/>
    <property type="project" value="UniProtKB-UniRule"/>
</dbReference>
<dbReference type="CDD" id="cd01518">
    <property type="entry name" value="RHOD_YceA"/>
    <property type="match status" value="1"/>
</dbReference>
<dbReference type="Gene3D" id="3.30.70.100">
    <property type="match status" value="1"/>
</dbReference>
<dbReference type="Gene3D" id="3.40.250.10">
    <property type="entry name" value="Rhodanese-like domain"/>
    <property type="match status" value="1"/>
</dbReference>
<dbReference type="HAMAP" id="MF_00469">
    <property type="entry name" value="TrhO"/>
    <property type="match status" value="1"/>
</dbReference>
<dbReference type="InterPro" id="IPR001763">
    <property type="entry name" value="Rhodanese-like_dom"/>
</dbReference>
<dbReference type="InterPro" id="IPR036873">
    <property type="entry name" value="Rhodanese-like_dom_sf"/>
</dbReference>
<dbReference type="InterPro" id="IPR020936">
    <property type="entry name" value="TrhO"/>
</dbReference>
<dbReference type="InterPro" id="IPR040503">
    <property type="entry name" value="TRHO_N"/>
</dbReference>
<dbReference type="NCBIfam" id="NF001136">
    <property type="entry name" value="PRK00142.1-4"/>
    <property type="match status" value="1"/>
</dbReference>
<dbReference type="PANTHER" id="PTHR43268:SF3">
    <property type="entry name" value="RHODANESE-LIKE DOMAIN-CONTAINING PROTEIN 7-RELATED"/>
    <property type="match status" value="1"/>
</dbReference>
<dbReference type="PANTHER" id="PTHR43268">
    <property type="entry name" value="THIOSULFATE SULFURTRANSFERASE/RHODANESE-LIKE DOMAIN-CONTAINING PROTEIN 2"/>
    <property type="match status" value="1"/>
</dbReference>
<dbReference type="Pfam" id="PF00581">
    <property type="entry name" value="Rhodanese"/>
    <property type="match status" value="1"/>
</dbReference>
<dbReference type="Pfam" id="PF17773">
    <property type="entry name" value="UPF0176_N"/>
    <property type="match status" value="1"/>
</dbReference>
<dbReference type="SMART" id="SM00450">
    <property type="entry name" value="RHOD"/>
    <property type="match status" value="1"/>
</dbReference>
<dbReference type="SUPFAM" id="SSF52821">
    <property type="entry name" value="Rhodanese/Cell cycle control phosphatase"/>
    <property type="match status" value="1"/>
</dbReference>
<dbReference type="PROSITE" id="PS50206">
    <property type="entry name" value="RHODANESE_3"/>
    <property type="match status" value="1"/>
</dbReference>
<reference key="1">
    <citation type="journal article" date="2008" name="BMC Genomics">
        <title>Genomics of an extreme psychrophile, Psychromonas ingrahamii.</title>
        <authorList>
            <person name="Riley M."/>
            <person name="Staley J.T."/>
            <person name="Danchin A."/>
            <person name="Wang T.Z."/>
            <person name="Brettin T.S."/>
            <person name="Hauser L.J."/>
            <person name="Land M.L."/>
            <person name="Thompson L.S."/>
        </authorList>
    </citation>
    <scope>NUCLEOTIDE SEQUENCE [LARGE SCALE GENOMIC DNA]</scope>
    <source>
        <strain>DSM 17664 / CCUG 51855 / 37</strain>
    </source>
</reference>
<accession>A1T026</accession>